<comment type="function">
    <text evidence="3 5">Ferredoxin-plastoquinone reductase involved in cyclic electron flow (CEF) around photosystem I. The homodimer is probably not involved in CEF.</text>
</comment>
<comment type="activity regulation">
    <text evidence="5">Inhibited by antimycin A.</text>
</comment>
<comment type="subunit">
    <text evidence="3 5">Homodimer and heterodimer with PGR5. Interacts with PGR5, FD2, petC, psaD1, LFNR1 and LFNR2. Also interacts with a Fe-containing cofactor (FCC).</text>
</comment>
<comment type="subcellular location">
    <subcellularLocation>
        <location evidence="3">Plastid</location>
        <location evidence="3">Chloroplast thylakoid membrane</location>
        <topology evidence="3">Multi-pass membrane protein</topology>
    </subcellularLocation>
    <text>Predominantly located in the appressed regions of the thylakoids and less abundant in the stroma lamellae.</text>
</comment>
<comment type="alternative products">
    <event type="alternative splicing"/>
    <isoform>
        <id>Q8H112-1</id>
        <name>1</name>
        <sequence type="displayed"/>
    </isoform>
    <isoform>
        <id>Q8H112-2</id>
        <name>2</name>
        <sequence type="described" ref="VSP_031964"/>
    </isoform>
    <isoform>
        <id>Q8H112-3</id>
        <name>3</name>
        <sequence type="described" ref="VSP_031963"/>
    </isoform>
</comment>
<comment type="induction">
    <text evidence="4">Up-regulated by drought stress.</text>
</comment>
<comment type="domain">
    <text>The C-terminal loop (258-324) is required for ferredoxin binding.</text>
</comment>
<comment type="PTM">
    <text>Disulfide bonds; Cys-300 and Cys-303 are probably involved in the formation of disulfide bridges with 'Cys-11' and 'Cys-105' of PGR5 while Cys-272 and Cys-275 are probably involved in the binding of a Fe-containing cofactor (FCC).</text>
</comment>
<comment type="disruption phenotype">
    <text evidence="3">No visible phenotype; due to the redundancy with PGRL1B. Pgrl1a and pgrl1b double mutant grows slowly and has pale green leaves.</text>
</comment>
<comment type="miscellaneous">
    <text evidence="7">Thioredoxins prevent homodimerization.</text>
</comment>
<comment type="similarity">
    <text evidence="6">Belongs to the PGR5 family.</text>
</comment>
<comment type="sequence caution" evidence="6">
    <conflict type="erroneous gene model prediction">
        <sequence resource="EMBL-CDS" id="CAA19804"/>
    </conflict>
</comment>
<comment type="sequence caution" evidence="6">
    <conflict type="erroneous gene model prediction">
        <sequence resource="EMBL-CDS" id="CAB79244"/>
    </conflict>
</comment>
<keyword id="KW-0025">Alternative splicing</keyword>
<keyword id="KW-0150">Chloroplast</keyword>
<keyword id="KW-1015">Disulfide bond</keyword>
<keyword id="KW-0249">Electron transport</keyword>
<keyword id="KW-0472">Membrane</keyword>
<keyword id="KW-0934">Plastid</keyword>
<keyword id="KW-1185">Reference proteome</keyword>
<keyword id="KW-0793">Thylakoid</keyword>
<keyword id="KW-0809">Transit peptide</keyword>
<keyword id="KW-0812">Transmembrane</keyword>
<keyword id="KW-1133">Transmembrane helix</keyword>
<keyword id="KW-0813">Transport</keyword>
<organism>
    <name type="scientific">Arabidopsis thaliana</name>
    <name type="common">Mouse-ear cress</name>
    <dbReference type="NCBI Taxonomy" id="3702"/>
    <lineage>
        <taxon>Eukaryota</taxon>
        <taxon>Viridiplantae</taxon>
        <taxon>Streptophyta</taxon>
        <taxon>Embryophyta</taxon>
        <taxon>Tracheophyta</taxon>
        <taxon>Spermatophyta</taxon>
        <taxon>Magnoliopsida</taxon>
        <taxon>eudicotyledons</taxon>
        <taxon>Gunneridae</taxon>
        <taxon>Pentapetalae</taxon>
        <taxon>rosids</taxon>
        <taxon>malvids</taxon>
        <taxon>Brassicales</taxon>
        <taxon>Brassicaceae</taxon>
        <taxon>Camelineae</taxon>
        <taxon>Arabidopsis</taxon>
    </lineage>
</organism>
<dbReference type="EMBL" id="AL031018">
    <property type="protein sequence ID" value="CAA19804.1"/>
    <property type="status" value="ALT_SEQ"/>
    <property type="molecule type" value="Genomic_DNA"/>
</dbReference>
<dbReference type="EMBL" id="AL161558">
    <property type="protein sequence ID" value="CAB79244.1"/>
    <property type="status" value="ALT_SEQ"/>
    <property type="molecule type" value="Genomic_DNA"/>
</dbReference>
<dbReference type="EMBL" id="CP002687">
    <property type="protein sequence ID" value="AEE84674.1"/>
    <property type="molecule type" value="Genomic_DNA"/>
</dbReference>
<dbReference type="EMBL" id="CP002687">
    <property type="protein sequence ID" value="AEE84675.1"/>
    <property type="molecule type" value="Genomic_DNA"/>
</dbReference>
<dbReference type="EMBL" id="CP002687">
    <property type="protein sequence ID" value="AEE84677.1"/>
    <property type="molecule type" value="Genomic_DNA"/>
</dbReference>
<dbReference type="EMBL" id="CP002687">
    <property type="protein sequence ID" value="AEE84678.1"/>
    <property type="molecule type" value="Genomic_DNA"/>
</dbReference>
<dbReference type="EMBL" id="BT000905">
    <property type="protein sequence ID" value="AAN41305.1"/>
    <property type="molecule type" value="mRNA"/>
</dbReference>
<dbReference type="PIR" id="T05120">
    <property type="entry name" value="T05120"/>
</dbReference>
<dbReference type="RefSeq" id="NP_001078431.1">
    <molecule id="Q8H112-3"/>
    <property type="nucleotide sequence ID" value="NM_001084962.1"/>
</dbReference>
<dbReference type="RefSeq" id="NP_001078432.1">
    <molecule id="Q8H112-2"/>
    <property type="nucleotide sequence ID" value="NM_001084963.1"/>
</dbReference>
<dbReference type="RefSeq" id="NP_567672.1">
    <molecule id="Q8H112-1"/>
    <property type="nucleotide sequence ID" value="NM_118418.4"/>
</dbReference>
<dbReference type="RefSeq" id="NP_849423.1">
    <molecule id="Q8H112-1"/>
    <property type="nucleotide sequence ID" value="NM_179092.1"/>
</dbReference>
<dbReference type="SMR" id="Q8H112"/>
<dbReference type="BioGRID" id="13677">
    <property type="interactions" value="25"/>
</dbReference>
<dbReference type="FunCoup" id="Q8H112">
    <property type="interactions" value="1239"/>
</dbReference>
<dbReference type="IntAct" id="Q8H112">
    <property type="interactions" value="18"/>
</dbReference>
<dbReference type="MINT" id="Q8H112"/>
<dbReference type="STRING" id="3702.Q8H112"/>
<dbReference type="iPTMnet" id="Q8H112"/>
<dbReference type="PaxDb" id="3702-AT4G22890.1"/>
<dbReference type="ProteomicsDB" id="235051">
    <molecule id="Q8H112-1"/>
</dbReference>
<dbReference type="EnsemblPlants" id="AT4G22890.1">
    <molecule id="Q8H112-1"/>
    <property type="protein sequence ID" value="AT4G22890.1"/>
    <property type="gene ID" value="AT4G22890"/>
</dbReference>
<dbReference type="EnsemblPlants" id="AT4G22890.3">
    <molecule id="Q8H112-1"/>
    <property type="protein sequence ID" value="AT4G22890.3"/>
    <property type="gene ID" value="AT4G22890"/>
</dbReference>
<dbReference type="EnsemblPlants" id="AT4G22890.4">
    <molecule id="Q8H112-3"/>
    <property type="protein sequence ID" value="AT4G22890.4"/>
    <property type="gene ID" value="AT4G22890"/>
</dbReference>
<dbReference type="EnsemblPlants" id="AT4G22890.5">
    <molecule id="Q8H112-2"/>
    <property type="protein sequence ID" value="AT4G22890.5"/>
    <property type="gene ID" value="AT4G22890"/>
</dbReference>
<dbReference type="GeneID" id="828388"/>
<dbReference type="Gramene" id="AT4G22890.1">
    <molecule id="Q8H112-1"/>
    <property type="protein sequence ID" value="AT4G22890.1"/>
    <property type="gene ID" value="AT4G22890"/>
</dbReference>
<dbReference type="Gramene" id="AT4G22890.3">
    <molecule id="Q8H112-1"/>
    <property type="protein sequence ID" value="AT4G22890.3"/>
    <property type="gene ID" value="AT4G22890"/>
</dbReference>
<dbReference type="Gramene" id="AT4G22890.4">
    <molecule id="Q8H112-3"/>
    <property type="protein sequence ID" value="AT4G22890.4"/>
    <property type="gene ID" value="AT4G22890"/>
</dbReference>
<dbReference type="Gramene" id="AT4G22890.5">
    <molecule id="Q8H112-2"/>
    <property type="protein sequence ID" value="AT4G22890.5"/>
    <property type="gene ID" value="AT4G22890"/>
</dbReference>
<dbReference type="KEGG" id="ath:AT4G22890"/>
<dbReference type="Araport" id="AT4G22890"/>
<dbReference type="TAIR" id="AT4G22890">
    <property type="gene designation" value="PGR5-LIKE A"/>
</dbReference>
<dbReference type="eggNOG" id="ENOG502QRSK">
    <property type="taxonomic scope" value="Eukaryota"/>
</dbReference>
<dbReference type="InParanoid" id="Q8H112"/>
<dbReference type="OMA" id="NVKCENC"/>
<dbReference type="OrthoDB" id="38589at2759"/>
<dbReference type="PhylomeDB" id="Q8H112"/>
<dbReference type="PRO" id="PR:Q8H112"/>
<dbReference type="Proteomes" id="UP000006548">
    <property type="component" value="Chromosome 4"/>
</dbReference>
<dbReference type="ExpressionAtlas" id="Q8H112">
    <property type="expression patterns" value="baseline and differential"/>
</dbReference>
<dbReference type="GO" id="GO:0009507">
    <property type="term" value="C:chloroplast"/>
    <property type="evidence" value="ECO:0007005"/>
    <property type="project" value="TAIR"/>
</dbReference>
<dbReference type="GO" id="GO:0009534">
    <property type="term" value="C:chloroplast thylakoid"/>
    <property type="evidence" value="ECO:0007005"/>
    <property type="project" value="TAIR"/>
</dbReference>
<dbReference type="GO" id="GO:0009535">
    <property type="term" value="C:chloroplast thylakoid membrane"/>
    <property type="evidence" value="ECO:0007005"/>
    <property type="project" value="TAIR"/>
</dbReference>
<dbReference type="GO" id="GO:0005829">
    <property type="term" value="C:cytosol"/>
    <property type="evidence" value="ECO:0007005"/>
    <property type="project" value="TAIR"/>
</dbReference>
<dbReference type="GO" id="GO:0009579">
    <property type="term" value="C:thylakoid"/>
    <property type="evidence" value="ECO:0000314"/>
    <property type="project" value="TAIR"/>
</dbReference>
<dbReference type="GO" id="GO:0042802">
    <property type="term" value="F:identical protein binding"/>
    <property type="evidence" value="ECO:0000353"/>
    <property type="project" value="UniProtKB"/>
</dbReference>
<dbReference type="GO" id="GO:0016730">
    <property type="term" value="F:oxidoreductase activity, acting on iron-sulfur proteins as donors"/>
    <property type="evidence" value="ECO:0000314"/>
    <property type="project" value="UniProtKB"/>
</dbReference>
<dbReference type="GO" id="GO:0019904">
    <property type="term" value="F:protein domain specific binding"/>
    <property type="evidence" value="ECO:0000353"/>
    <property type="project" value="CAFA"/>
</dbReference>
<dbReference type="GO" id="GO:0009773">
    <property type="term" value="P:photosynthetic electron transport in photosystem I"/>
    <property type="evidence" value="ECO:0000315"/>
    <property type="project" value="UniProtKB"/>
</dbReference>
<dbReference type="InterPro" id="IPR039987">
    <property type="entry name" value="PGRL1"/>
</dbReference>
<dbReference type="PANTHER" id="PTHR31032:SF9">
    <property type="entry name" value="PGR5-LIKE PROTEIN 1A, CHLOROPLASTIC"/>
    <property type="match status" value="1"/>
</dbReference>
<dbReference type="PANTHER" id="PTHR31032">
    <property type="entry name" value="PGR5-LIKE PROTEIN 1B, CHLOROPLASTIC"/>
    <property type="match status" value="1"/>
</dbReference>
<proteinExistence type="evidence at protein level"/>
<gene>
    <name type="primary">PGRL1A</name>
    <name type="ordered locus">At4g22890</name>
    <name type="ORF">F7H19.70</name>
</gene>
<name>PGL1A_ARATH</name>
<reference key="1">
    <citation type="journal article" date="1999" name="Nature">
        <title>Sequence and analysis of chromosome 4 of the plant Arabidopsis thaliana.</title>
        <authorList>
            <person name="Mayer K.F.X."/>
            <person name="Schueller C."/>
            <person name="Wambutt R."/>
            <person name="Murphy G."/>
            <person name="Volckaert G."/>
            <person name="Pohl T."/>
            <person name="Duesterhoeft A."/>
            <person name="Stiekema W."/>
            <person name="Entian K.-D."/>
            <person name="Terryn N."/>
            <person name="Harris B."/>
            <person name="Ansorge W."/>
            <person name="Brandt P."/>
            <person name="Grivell L.A."/>
            <person name="Rieger M."/>
            <person name="Weichselgartner M."/>
            <person name="de Simone V."/>
            <person name="Obermaier B."/>
            <person name="Mache R."/>
            <person name="Mueller M."/>
            <person name="Kreis M."/>
            <person name="Delseny M."/>
            <person name="Puigdomenech P."/>
            <person name="Watson M."/>
            <person name="Schmidtheini T."/>
            <person name="Reichert B."/>
            <person name="Portetelle D."/>
            <person name="Perez-Alonso M."/>
            <person name="Boutry M."/>
            <person name="Bancroft I."/>
            <person name="Vos P."/>
            <person name="Hoheisel J."/>
            <person name="Zimmermann W."/>
            <person name="Wedler H."/>
            <person name="Ridley P."/>
            <person name="Langham S.-A."/>
            <person name="McCullagh B."/>
            <person name="Bilham L."/>
            <person name="Robben J."/>
            <person name="van der Schueren J."/>
            <person name="Grymonprez B."/>
            <person name="Chuang Y.-J."/>
            <person name="Vandenbussche F."/>
            <person name="Braeken M."/>
            <person name="Weltjens I."/>
            <person name="Voet M."/>
            <person name="Bastiaens I."/>
            <person name="Aert R."/>
            <person name="Defoor E."/>
            <person name="Weitzenegger T."/>
            <person name="Bothe G."/>
            <person name="Ramsperger U."/>
            <person name="Hilbert H."/>
            <person name="Braun M."/>
            <person name="Holzer E."/>
            <person name="Brandt A."/>
            <person name="Peters S."/>
            <person name="van Staveren M."/>
            <person name="Dirkse W."/>
            <person name="Mooijman P."/>
            <person name="Klein Lankhorst R."/>
            <person name="Rose M."/>
            <person name="Hauf J."/>
            <person name="Koetter P."/>
            <person name="Berneiser S."/>
            <person name="Hempel S."/>
            <person name="Feldpausch M."/>
            <person name="Lamberth S."/>
            <person name="Van den Daele H."/>
            <person name="De Keyser A."/>
            <person name="Buysshaert C."/>
            <person name="Gielen J."/>
            <person name="Villarroel R."/>
            <person name="De Clercq R."/>
            <person name="van Montagu M."/>
            <person name="Rogers J."/>
            <person name="Cronin A."/>
            <person name="Quail M.A."/>
            <person name="Bray-Allen S."/>
            <person name="Clark L."/>
            <person name="Doggett J."/>
            <person name="Hall S."/>
            <person name="Kay M."/>
            <person name="Lennard N."/>
            <person name="McLay K."/>
            <person name="Mayes R."/>
            <person name="Pettett A."/>
            <person name="Rajandream M.A."/>
            <person name="Lyne M."/>
            <person name="Benes V."/>
            <person name="Rechmann S."/>
            <person name="Borkova D."/>
            <person name="Bloecker H."/>
            <person name="Scharfe M."/>
            <person name="Grimm M."/>
            <person name="Loehnert T.-H."/>
            <person name="Dose S."/>
            <person name="de Haan M."/>
            <person name="Maarse A.C."/>
            <person name="Schaefer M."/>
            <person name="Mueller-Auer S."/>
            <person name="Gabel C."/>
            <person name="Fuchs M."/>
            <person name="Fartmann B."/>
            <person name="Granderath K."/>
            <person name="Dauner D."/>
            <person name="Herzl A."/>
            <person name="Neumann S."/>
            <person name="Argiriou A."/>
            <person name="Vitale D."/>
            <person name="Liguori R."/>
            <person name="Piravandi E."/>
            <person name="Massenet O."/>
            <person name="Quigley F."/>
            <person name="Clabauld G."/>
            <person name="Muendlein A."/>
            <person name="Felber R."/>
            <person name="Schnabl S."/>
            <person name="Hiller R."/>
            <person name="Schmidt W."/>
            <person name="Lecharny A."/>
            <person name="Aubourg S."/>
            <person name="Chefdor F."/>
            <person name="Cooke R."/>
            <person name="Berger C."/>
            <person name="Monfort A."/>
            <person name="Casacuberta E."/>
            <person name="Gibbons T."/>
            <person name="Weber N."/>
            <person name="Vandenbol M."/>
            <person name="Bargues M."/>
            <person name="Terol J."/>
            <person name="Torres A."/>
            <person name="Perez-Perez A."/>
            <person name="Purnelle B."/>
            <person name="Bent E."/>
            <person name="Johnson S."/>
            <person name="Tacon D."/>
            <person name="Jesse T."/>
            <person name="Heijnen L."/>
            <person name="Schwarz S."/>
            <person name="Scholler P."/>
            <person name="Heber S."/>
            <person name="Francs P."/>
            <person name="Bielke C."/>
            <person name="Frishman D."/>
            <person name="Haase D."/>
            <person name="Lemcke K."/>
            <person name="Mewes H.-W."/>
            <person name="Stocker S."/>
            <person name="Zaccaria P."/>
            <person name="Bevan M."/>
            <person name="Wilson R.K."/>
            <person name="de la Bastide M."/>
            <person name="Habermann K."/>
            <person name="Parnell L."/>
            <person name="Dedhia N."/>
            <person name="Gnoj L."/>
            <person name="Schutz K."/>
            <person name="Huang E."/>
            <person name="Spiegel L."/>
            <person name="Sekhon M."/>
            <person name="Murray J."/>
            <person name="Sheet P."/>
            <person name="Cordes M."/>
            <person name="Abu-Threideh J."/>
            <person name="Stoneking T."/>
            <person name="Kalicki J."/>
            <person name="Graves T."/>
            <person name="Harmon G."/>
            <person name="Edwards J."/>
            <person name="Latreille P."/>
            <person name="Courtney L."/>
            <person name="Cloud J."/>
            <person name="Abbott A."/>
            <person name="Scott K."/>
            <person name="Johnson D."/>
            <person name="Minx P."/>
            <person name="Bentley D."/>
            <person name="Fulton B."/>
            <person name="Miller N."/>
            <person name="Greco T."/>
            <person name="Kemp K."/>
            <person name="Kramer J."/>
            <person name="Fulton L."/>
            <person name="Mardis E."/>
            <person name="Dante M."/>
            <person name="Pepin K."/>
            <person name="Hillier L.W."/>
            <person name="Nelson J."/>
            <person name="Spieth J."/>
            <person name="Ryan E."/>
            <person name="Andrews S."/>
            <person name="Geisel C."/>
            <person name="Layman D."/>
            <person name="Du H."/>
            <person name="Ali J."/>
            <person name="Berghoff A."/>
            <person name="Jones K."/>
            <person name="Drone K."/>
            <person name="Cotton M."/>
            <person name="Joshu C."/>
            <person name="Antonoiu B."/>
            <person name="Zidanic M."/>
            <person name="Strong C."/>
            <person name="Sun H."/>
            <person name="Lamar B."/>
            <person name="Yordan C."/>
            <person name="Ma P."/>
            <person name="Zhong J."/>
            <person name="Preston R."/>
            <person name="Vil D."/>
            <person name="Shekher M."/>
            <person name="Matero A."/>
            <person name="Shah R."/>
            <person name="Swaby I.K."/>
            <person name="O'Shaughnessy A."/>
            <person name="Rodriguez M."/>
            <person name="Hoffman J."/>
            <person name="Till S."/>
            <person name="Granat S."/>
            <person name="Shohdy N."/>
            <person name="Hasegawa A."/>
            <person name="Hameed A."/>
            <person name="Lodhi M."/>
            <person name="Johnson A."/>
            <person name="Chen E."/>
            <person name="Marra M.A."/>
            <person name="Martienssen R."/>
            <person name="McCombie W.R."/>
        </authorList>
    </citation>
    <scope>NUCLEOTIDE SEQUENCE [LARGE SCALE GENOMIC DNA]</scope>
    <source>
        <strain>cv. Columbia</strain>
    </source>
</reference>
<reference key="2">
    <citation type="journal article" date="2017" name="Plant J.">
        <title>Araport11: a complete reannotation of the Arabidopsis thaliana reference genome.</title>
        <authorList>
            <person name="Cheng C.Y."/>
            <person name="Krishnakumar V."/>
            <person name="Chan A.P."/>
            <person name="Thibaud-Nissen F."/>
            <person name="Schobel S."/>
            <person name="Town C.D."/>
        </authorList>
    </citation>
    <scope>GENOME REANNOTATION</scope>
    <source>
        <strain>cv. Columbia</strain>
    </source>
</reference>
<reference key="3">
    <citation type="journal article" date="2003" name="Science">
        <title>Empirical analysis of transcriptional activity in the Arabidopsis genome.</title>
        <authorList>
            <person name="Yamada K."/>
            <person name="Lim J."/>
            <person name="Dale J.M."/>
            <person name="Chen H."/>
            <person name="Shinn P."/>
            <person name="Palm C.J."/>
            <person name="Southwick A.M."/>
            <person name="Wu H.C."/>
            <person name="Kim C.J."/>
            <person name="Nguyen M."/>
            <person name="Pham P.K."/>
            <person name="Cheuk R.F."/>
            <person name="Karlin-Newmann G."/>
            <person name="Liu S.X."/>
            <person name="Lam B."/>
            <person name="Sakano H."/>
            <person name="Wu T."/>
            <person name="Yu G."/>
            <person name="Miranda M."/>
            <person name="Quach H.L."/>
            <person name="Tripp M."/>
            <person name="Chang C.H."/>
            <person name="Lee J.M."/>
            <person name="Toriumi M.J."/>
            <person name="Chan M.M."/>
            <person name="Tang C.C."/>
            <person name="Onodera C.S."/>
            <person name="Deng J.M."/>
            <person name="Akiyama K."/>
            <person name="Ansari Y."/>
            <person name="Arakawa T."/>
            <person name="Banh J."/>
            <person name="Banno F."/>
            <person name="Bowser L."/>
            <person name="Brooks S.Y."/>
            <person name="Carninci P."/>
            <person name="Chao Q."/>
            <person name="Choy N."/>
            <person name="Enju A."/>
            <person name="Goldsmith A.D."/>
            <person name="Gurjal M."/>
            <person name="Hansen N.F."/>
            <person name="Hayashizaki Y."/>
            <person name="Johnson-Hopson C."/>
            <person name="Hsuan V.W."/>
            <person name="Iida K."/>
            <person name="Karnes M."/>
            <person name="Khan S."/>
            <person name="Koesema E."/>
            <person name="Ishida J."/>
            <person name="Jiang P.X."/>
            <person name="Jones T."/>
            <person name="Kawai J."/>
            <person name="Kamiya A."/>
            <person name="Meyers C."/>
            <person name="Nakajima M."/>
            <person name="Narusaka M."/>
            <person name="Seki M."/>
            <person name="Sakurai T."/>
            <person name="Satou M."/>
            <person name="Tamse R."/>
            <person name="Vaysberg M."/>
            <person name="Wallender E.K."/>
            <person name="Wong C."/>
            <person name="Yamamura Y."/>
            <person name="Yuan S."/>
            <person name="Shinozaki K."/>
            <person name="Davis R.W."/>
            <person name="Theologis A."/>
            <person name="Ecker J.R."/>
        </authorList>
    </citation>
    <scope>NUCLEOTIDE SEQUENCE [LARGE SCALE MRNA]</scope>
    <source>
        <strain>cv. Columbia</strain>
    </source>
</reference>
<reference key="4">
    <citation type="journal article" date="2008" name="Cell">
        <title>A complex containing PGRL1 and PGR5 is involved in the switch between linear and cyclic electron flow in Arabidopsis.</title>
        <authorList>
            <person name="DalCorso G."/>
            <person name="Pesaresi P."/>
            <person name="Masiero S."/>
            <person name="Aseeva E."/>
            <person name="Schuenemann D."/>
            <person name="Finazzi G."/>
            <person name="Joliot P."/>
            <person name="Barbato R."/>
            <person name="Leister D."/>
        </authorList>
    </citation>
    <scope>FUNCTION</scope>
    <scope>SUBCELLULAR LOCATION</scope>
    <scope>INTERACTION WITH PGR5</scope>
    <scope>FD2</scope>
    <scope>PASD1</scope>
    <scope>LFNR1 AND LFNR2</scope>
    <scope>DISRUPTION PHENOTYPE</scope>
    <source>
        <strain>cv. Columbia</strain>
    </source>
</reference>
<reference key="5">
    <citation type="journal article" date="2009" name="Plant Physiol.">
        <title>Large-scale Arabidopsis phosphoproteome profiling reveals novel chloroplast kinase substrates and phosphorylation networks.</title>
        <authorList>
            <person name="Reiland S."/>
            <person name="Messerli G."/>
            <person name="Baerenfaller K."/>
            <person name="Gerrits B."/>
            <person name="Endler A."/>
            <person name="Grossmann J."/>
            <person name="Gruissem W."/>
            <person name="Baginsky S."/>
        </authorList>
    </citation>
    <scope>IDENTIFICATION BY MASS SPECTROMETRY [LARGE SCALE ANALYSIS]</scope>
</reference>
<reference key="6">
    <citation type="journal article" date="2010" name="J. Plant Physiol.">
        <title>Drought stress-induced upregulation of components involved in ferredoxin-dependent cyclic electron transfer.</title>
        <authorList>
            <person name="Lehtimaeki N."/>
            <person name="Lintala M."/>
            <person name="Allahverdiyeva Y."/>
            <person name="Aro E.M."/>
            <person name="Mulo P."/>
        </authorList>
    </citation>
    <scope>INDUCTION BY DROUGHT</scope>
</reference>
<reference key="7">
    <citation type="journal article" date="2013" name="Mol. Cell">
        <title>PGRL1 is the elusive ferredoxin-plastoquinone reductase in photosynthetic cyclic electron flow.</title>
        <authorList>
            <person name="Hertle A.P."/>
            <person name="Blunder T."/>
            <person name="Wunder T."/>
            <person name="Pesaresi P."/>
            <person name="Pribil M."/>
            <person name="Armbruster U."/>
            <person name="Leister D."/>
        </authorList>
    </citation>
    <scope>FUNCTION</scope>
    <scope>SUBUNIT</scope>
    <scope>INTERACTION WITH PGR5 AND PETC</scope>
    <scope>DISULFIDE BONDS</scope>
    <scope>MUTAGENESIS OF CYS-82; CYS-183; CYS-272; CYS-275; CYS-300 AND CYS-303</scope>
    <scope>ACTIVITY REGULATION</scope>
</reference>
<evidence type="ECO:0000255" key="1"/>
<evidence type="ECO:0000256" key="2">
    <source>
        <dbReference type="SAM" id="MobiDB-lite"/>
    </source>
</evidence>
<evidence type="ECO:0000269" key="3">
    <source>
    </source>
</evidence>
<evidence type="ECO:0000269" key="4">
    <source>
    </source>
</evidence>
<evidence type="ECO:0000269" key="5">
    <source>
    </source>
</evidence>
<evidence type="ECO:0000305" key="6"/>
<evidence type="ECO:0000305" key="7">
    <source>
    </source>
</evidence>
<protein>
    <recommendedName>
        <fullName>PGR5-like protein 1A, chloroplastic</fullName>
    </recommendedName>
    <alternativeName>
        <fullName>Ferredoxin-plastoquinone reductase 1</fullName>
    </alternativeName>
</protein>
<feature type="transit peptide" description="Chloroplast" evidence="1">
    <location>
        <begin position="1"/>
        <end position="60"/>
    </location>
</feature>
<feature type="chain" id="PRO_0000322592" description="PGR5-like protein 1A, chloroplastic">
    <location>
        <begin position="61"/>
        <end position="324"/>
    </location>
</feature>
<feature type="topological domain" description="Stromal">
    <location>
        <begin position="61"/>
        <end position="198"/>
    </location>
</feature>
<feature type="transmembrane region" description="Helical; Name=1">
    <location>
        <begin position="199"/>
        <end position="219"/>
    </location>
</feature>
<feature type="topological domain" description="Lumenal, thylakoid">
    <location>
        <begin position="220"/>
        <end position="236"/>
    </location>
</feature>
<feature type="transmembrane region" description="Helical; Name=2">
    <location>
        <begin position="237"/>
        <end position="257"/>
    </location>
</feature>
<feature type="topological domain" description="Stromal">
    <location>
        <begin position="258"/>
        <end position="324"/>
    </location>
</feature>
<feature type="region of interest" description="Disordered" evidence="2">
    <location>
        <begin position="16"/>
        <end position="42"/>
    </location>
</feature>
<feature type="disulfide bond" description="In monomeric form" evidence="5">
    <location>
        <begin position="82"/>
        <end position="183"/>
    </location>
</feature>
<feature type="disulfide bond" description="Interchain (with C-183); in homodimeric form" evidence="5">
    <location>
        <position position="82"/>
    </location>
</feature>
<feature type="disulfide bond" description="Interchain (with C-82); in homodimeric form" evidence="5">
    <location>
        <position position="183"/>
    </location>
</feature>
<feature type="splice variant" id="VSP_031963" description="In isoform 3." evidence="6">
    <location>
        <begin position="67"/>
        <end position="69"/>
    </location>
</feature>
<feature type="splice variant" id="VSP_031964" description="In isoform 2." evidence="6">
    <location>
        <begin position="67"/>
        <end position="68"/>
    </location>
</feature>
<feature type="mutagenesis site" description="Loss of photosynthetic cyclic electron flow, loss of formation of oxidized monomer, and decreased FCC binding and dimer formation with PGR5. Loss of dimerization; when associated with S-183." evidence="5">
    <original>C</original>
    <variation>S</variation>
    <location>
        <position position="82"/>
    </location>
</feature>
<feature type="mutagenesis site" description="Loss of photosynthetic cyclic electron flow, loss of formation of oxidized monomer, and decreased FCC binding and dimer formation with PGR5. Loss of dimerization; when associated with S-82." evidence="5">
    <original>C</original>
    <variation>S</variation>
    <location>
        <position position="183"/>
    </location>
</feature>
<feature type="mutagenesis site" description="Loss of photosynthetic cyclic electron flow, loss of FCC binding, but no effect on dimer formation with PGR5; when associated with S-275. Loss of dimer formation with PGR5; when associated with S-275; S-300 and S-303." evidence="5">
    <original>C</original>
    <variation>S</variation>
    <location>
        <position position="272"/>
    </location>
</feature>
<feature type="mutagenesis site" description="Loss of photosynthetic cyclic electron flow, loss of FCC binding, but no effect on dimer formation with PGR5; when associated with S-272. Loss of dimer formation with PGR5; when associated with S-272; S-300 and S-303." evidence="5">
    <original>C</original>
    <variation>S</variation>
    <location>
        <position position="275"/>
    </location>
</feature>
<feature type="mutagenesis site" description="Loss of photosynthetic cyclic electron flow. No effect on FCC binding or dimer formation with PGR5; when associated with S-303. Loss of dimer formation with PGR5; when associated with S-272; S-275 and S-303." evidence="5">
    <original>C</original>
    <variation>S</variation>
    <location>
        <position position="300"/>
    </location>
</feature>
<feature type="mutagenesis site" description="Loss of photosynthetic cyclic electron flow. No effect on FCC binding or dimer formation with PGR5; when associated with S-300. Loss of dimer formation with PGR5; when associated with S-272; S-275 and S-300." evidence="5">
    <original>C</original>
    <variation>S</variation>
    <location>
        <position position="303"/>
    </location>
</feature>
<accession>Q8H112</accession>
<accession>A8MS43</accession>
<accession>A8MSD4</accession>
<accession>O82738</accession>
<sequence length="324" mass="35721">MGSKMLFSLTSPRLFSAVSRKPSSSFSPSPPSPSSRTQWTQLSPGKSISLRRRVFLLPAKATTEQSGPVGGDNVDSNVLPYCSINKAEKKTIGEMEQEFLQALQSFYYDGKAIMSNEEFDNLKEELMWEGSSVVMLSSDEQRFLEASMAYVSGNPILNDEEYDKLKLKLKIDGSDIVSEGPRCSLRSKKVYSDLAVDYFKMLLLNVPATVVALGLFFFLDDITGFEITYIMELPEPYSFIFTWFAAVPVIVYLALSITKLIIKDFLILKGPCPNCGTENTSFFGTILSISSGGKTNTVKCTNCGTAMVYDSGSRLITLPEGSQA</sequence>